<organism>
    <name type="scientific">Rickettsia akari (strain Hartford)</name>
    <dbReference type="NCBI Taxonomy" id="293614"/>
    <lineage>
        <taxon>Bacteria</taxon>
        <taxon>Pseudomonadati</taxon>
        <taxon>Pseudomonadota</taxon>
        <taxon>Alphaproteobacteria</taxon>
        <taxon>Rickettsiales</taxon>
        <taxon>Rickettsiaceae</taxon>
        <taxon>Rickettsieae</taxon>
        <taxon>Rickettsia</taxon>
        <taxon>spotted fever group</taxon>
    </lineage>
</organism>
<accession>A8GM19</accession>
<name>QUEF_RICAH</name>
<protein>
    <recommendedName>
        <fullName evidence="1">NADPH-dependent 7-cyano-7-deazaguanine reductase</fullName>
        <ecNumber evidence="1">1.7.1.13</ecNumber>
    </recommendedName>
    <alternativeName>
        <fullName evidence="1">7-cyano-7-carbaguanine reductase</fullName>
    </alternativeName>
    <alternativeName>
        <fullName evidence="1">NADPH-dependent nitrile oxidoreductase</fullName>
    </alternativeName>
    <alternativeName>
        <fullName evidence="1">PreQ(0) reductase</fullName>
    </alternativeName>
</protein>
<keyword id="KW-0963">Cytoplasm</keyword>
<keyword id="KW-0521">NADP</keyword>
<keyword id="KW-0560">Oxidoreductase</keyword>
<keyword id="KW-0671">Queuosine biosynthesis</keyword>
<reference key="1">
    <citation type="submission" date="2007-09" db="EMBL/GenBank/DDBJ databases">
        <title>Complete genome sequence of Rickettsia akari.</title>
        <authorList>
            <person name="Madan A."/>
            <person name="Fahey J."/>
            <person name="Helton E."/>
            <person name="Ketteman M."/>
            <person name="Madan A."/>
            <person name="Rodrigues S."/>
            <person name="Sanchez A."/>
            <person name="Whiting M."/>
            <person name="Dasch G."/>
            <person name="Eremeeva M."/>
        </authorList>
    </citation>
    <scope>NUCLEOTIDE SEQUENCE [LARGE SCALE GENOMIC DNA]</scope>
    <source>
        <strain>Hartford</strain>
    </source>
</reference>
<proteinExistence type="inferred from homology"/>
<comment type="function">
    <text evidence="1">Catalyzes the NADPH-dependent reduction of 7-cyano-7-deazaguanine (preQ0) to 7-aminomethyl-7-deazaguanine (preQ1).</text>
</comment>
<comment type="catalytic activity">
    <reaction evidence="1">
        <text>7-aminomethyl-7-carbaguanine + 2 NADP(+) = 7-cyano-7-deazaguanine + 2 NADPH + 3 H(+)</text>
        <dbReference type="Rhea" id="RHEA:13409"/>
        <dbReference type="ChEBI" id="CHEBI:15378"/>
        <dbReference type="ChEBI" id="CHEBI:45075"/>
        <dbReference type="ChEBI" id="CHEBI:57783"/>
        <dbReference type="ChEBI" id="CHEBI:58349"/>
        <dbReference type="ChEBI" id="CHEBI:58703"/>
        <dbReference type="EC" id="1.7.1.13"/>
    </reaction>
</comment>
<comment type="pathway">
    <text evidence="1">tRNA modification; tRNA-queuosine biosynthesis.</text>
</comment>
<comment type="subunit">
    <text evidence="1">Homodimer.</text>
</comment>
<comment type="subcellular location">
    <subcellularLocation>
        <location evidence="1">Cytoplasm</location>
    </subcellularLocation>
</comment>
<comment type="similarity">
    <text evidence="1">Belongs to the GTP cyclohydrolase I family. QueF type 2 subfamily.</text>
</comment>
<dbReference type="EC" id="1.7.1.13" evidence="1"/>
<dbReference type="EMBL" id="CP000847">
    <property type="protein sequence ID" value="ABV74444.1"/>
    <property type="molecule type" value="Genomic_DNA"/>
</dbReference>
<dbReference type="RefSeq" id="WP_012013314.1">
    <property type="nucleotide sequence ID" value="NC_009881.1"/>
</dbReference>
<dbReference type="SMR" id="A8GM19"/>
<dbReference type="STRING" id="293614.A1C_00555"/>
<dbReference type="KEGG" id="rak:A1C_00555"/>
<dbReference type="eggNOG" id="COG0780">
    <property type="taxonomic scope" value="Bacteria"/>
</dbReference>
<dbReference type="eggNOG" id="COG2904">
    <property type="taxonomic scope" value="Bacteria"/>
</dbReference>
<dbReference type="HOGENOM" id="CLU_054738_0_0_5"/>
<dbReference type="UniPathway" id="UPA00392"/>
<dbReference type="Proteomes" id="UP000006830">
    <property type="component" value="Chromosome"/>
</dbReference>
<dbReference type="GO" id="GO:0005737">
    <property type="term" value="C:cytoplasm"/>
    <property type="evidence" value="ECO:0007669"/>
    <property type="project" value="UniProtKB-SubCell"/>
</dbReference>
<dbReference type="GO" id="GO:0033739">
    <property type="term" value="F:preQ1 synthase activity"/>
    <property type="evidence" value="ECO:0007669"/>
    <property type="project" value="UniProtKB-UniRule"/>
</dbReference>
<dbReference type="GO" id="GO:0008616">
    <property type="term" value="P:queuosine biosynthetic process"/>
    <property type="evidence" value="ECO:0007669"/>
    <property type="project" value="UniProtKB-UniRule"/>
</dbReference>
<dbReference type="GO" id="GO:0006400">
    <property type="term" value="P:tRNA modification"/>
    <property type="evidence" value="ECO:0007669"/>
    <property type="project" value="UniProtKB-UniRule"/>
</dbReference>
<dbReference type="Gene3D" id="3.30.1130.10">
    <property type="match status" value="2"/>
</dbReference>
<dbReference type="HAMAP" id="MF_00817">
    <property type="entry name" value="QueF_type2"/>
    <property type="match status" value="1"/>
</dbReference>
<dbReference type="InterPro" id="IPR043133">
    <property type="entry name" value="GTP-CH-I_C/QueF"/>
</dbReference>
<dbReference type="InterPro" id="IPR050084">
    <property type="entry name" value="NADPH_dep_7-cyano-7-deazaG_red"/>
</dbReference>
<dbReference type="InterPro" id="IPR029500">
    <property type="entry name" value="QueF"/>
</dbReference>
<dbReference type="InterPro" id="IPR029139">
    <property type="entry name" value="QueF_N"/>
</dbReference>
<dbReference type="InterPro" id="IPR016428">
    <property type="entry name" value="QueF_type2"/>
</dbReference>
<dbReference type="NCBIfam" id="TIGR03138">
    <property type="entry name" value="QueF"/>
    <property type="match status" value="1"/>
</dbReference>
<dbReference type="PANTHER" id="PTHR34354">
    <property type="entry name" value="NADPH-DEPENDENT 7-CYANO-7-DEAZAGUANINE REDUCTASE"/>
    <property type="match status" value="1"/>
</dbReference>
<dbReference type="PANTHER" id="PTHR34354:SF1">
    <property type="entry name" value="NADPH-DEPENDENT 7-CYANO-7-DEAZAGUANINE REDUCTASE"/>
    <property type="match status" value="1"/>
</dbReference>
<dbReference type="Pfam" id="PF14489">
    <property type="entry name" value="QueF"/>
    <property type="match status" value="1"/>
</dbReference>
<dbReference type="Pfam" id="PF14819">
    <property type="entry name" value="QueF_N"/>
    <property type="match status" value="1"/>
</dbReference>
<dbReference type="PIRSF" id="PIRSF004750">
    <property type="entry name" value="Nitrile_oxidored_YqcD_prd"/>
    <property type="match status" value="1"/>
</dbReference>
<dbReference type="SUPFAM" id="SSF55620">
    <property type="entry name" value="Tetrahydrobiopterin biosynthesis enzymes-like"/>
    <property type="match status" value="1"/>
</dbReference>
<feature type="chain" id="PRO_1000062356" description="NADPH-dependent 7-cyano-7-deazaguanine reductase">
    <location>
        <begin position="1"/>
        <end position="273"/>
    </location>
</feature>
<feature type="active site" description="Thioimide intermediate" evidence="1">
    <location>
        <position position="179"/>
    </location>
</feature>
<feature type="active site" description="Proton donor" evidence="1">
    <location>
        <position position="186"/>
    </location>
</feature>
<feature type="binding site" evidence="1">
    <location>
        <begin position="81"/>
        <end position="83"/>
    </location>
    <ligand>
        <name>substrate</name>
    </ligand>
</feature>
<feature type="binding site" evidence="1">
    <location>
        <begin position="83"/>
        <end position="84"/>
    </location>
    <ligand>
        <name>NADPH</name>
        <dbReference type="ChEBI" id="CHEBI:57783"/>
    </ligand>
</feature>
<feature type="binding site" evidence="1">
    <location>
        <begin position="218"/>
        <end position="219"/>
    </location>
    <ligand>
        <name>substrate</name>
    </ligand>
</feature>
<feature type="binding site" evidence="1">
    <location>
        <begin position="247"/>
        <end position="248"/>
    </location>
    <ligand>
        <name>NADPH</name>
        <dbReference type="ChEBI" id="CHEBI:57783"/>
    </ligand>
</feature>
<gene>
    <name evidence="1" type="primary">queF</name>
    <name type="ordered locus">A1C_00555</name>
</gene>
<sequence>MPLSTSLLGKTSTYKDSYDATLLFKIPRINNRNALGINSNNLPFYGVDIWNTYELSCINKKGKPWVGVGTFYIPTDSENIVESKSFKLYLNSFNNFVVESVEELERIILQDLSNVTHAKVTGRIFPINTKIAFGVPSGKNIDALDIVCNNYGPPDNSLVEYEEVLVEEEINSNLLKSNCLVTGQPDWGSIVIKYKGKKLKHDSFLKYLISFRNYHEFAEQCAERIFTDIKNAIKPDFLSLYIVYTRRGGIDICPYRSTDKSYSLPSDKRLIRQ</sequence>
<evidence type="ECO:0000255" key="1">
    <source>
        <dbReference type="HAMAP-Rule" id="MF_00817"/>
    </source>
</evidence>